<proteinExistence type="inferred from homology"/>
<reference key="1">
    <citation type="journal article" date="2008" name="BMC Genomics">
        <title>Acidithiobacillus ferrooxidans metabolism: from genome sequence to industrial applications.</title>
        <authorList>
            <person name="Valdes J."/>
            <person name="Pedroso I."/>
            <person name="Quatrini R."/>
            <person name="Dodson R.J."/>
            <person name="Tettelin H."/>
            <person name="Blake R. II"/>
            <person name="Eisen J.A."/>
            <person name="Holmes D.S."/>
        </authorList>
    </citation>
    <scope>NUCLEOTIDE SEQUENCE [LARGE SCALE GENOMIC DNA]</scope>
    <source>
        <strain>ATCC 23270 / DSM 14882 / CIP 104768 / NCIMB 8455</strain>
    </source>
</reference>
<gene>
    <name evidence="1" type="primary">rplT</name>
    <name type="ordered locus">AFE_2611</name>
</gene>
<sequence>MSRVKRGVTAHARHKKVLARAKGFRGQRKSNYRIAHQAVMKALTYEYRDRRTKKRDFRSLWIVRINAAARSEGVTYSRFMNGLLRAGIQLDRKVLADIAVRDKAAFSRLVEVVKGQLAA</sequence>
<name>RL20_ACIF2</name>
<comment type="function">
    <text evidence="1">Binds directly to 23S ribosomal RNA and is necessary for the in vitro assembly process of the 50S ribosomal subunit. It is not involved in the protein synthesizing functions of that subunit.</text>
</comment>
<comment type="similarity">
    <text evidence="1">Belongs to the bacterial ribosomal protein bL20 family.</text>
</comment>
<organism>
    <name type="scientific">Acidithiobacillus ferrooxidans (strain ATCC 23270 / DSM 14882 / CIP 104768 / NCIMB 8455)</name>
    <name type="common">Ferrobacillus ferrooxidans (strain ATCC 23270)</name>
    <dbReference type="NCBI Taxonomy" id="243159"/>
    <lineage>
        <taxon>Bacteria</taxon>
        <taxon>Pseudomonadati</taxon>
        <taxon>Pseudomonadota</taxon>
        <taxon>Acidithiobacillia</taxon>
        <taxon>Acidithiobacillales</taxon>
        <taxon>Acidithiobacillaceae</taxon>
        <taxon>Acidithiobacillus</taxon>
    </lineage>
</organism>
<evidence type="ECO:0000255" key="1">
    <source>
        <dbReference type="HAMAP-Rule" id="MF_00382"/>
    </source>
</evidence>
<evidence type="ECO:0000305" key="2"/>
<dbReference type="EMBL" id="CP001219">
    <property type="protein sequence ID" value="ACK80680.1"/>
    <property type="molecule type" value="Genomic_DNA"/>
</dbReference>
<dbReference type="RefSeq" id="WP_012537291.1">
    <property type="nucleotide sequence ID" value="NC_011761.1"/>
</dbReference>
<dbReference type="SMR" id="B7J7S7"/>
<dbReference type="STRING" id="243159.AFE_2611"/>
<dbReference type="PaxDb" id="243159-AFE_2611"/>
<dbReference type="GeneID" id="89662264"/>
<dbReference type="KEGG" id="afr:AFE_2611"/>
<dbReference type="eggNOG" id="COG0292">
    <property type="taxonomic scope" value="Bacteria"/>
</dbReference>
<dbReference type="HOGENOM" id="CLU_123265_0_1_6"/>
<dbReference type="Proteomes" id="UP000001362">
    <property type="component" value="Chromosome"/>
</dbReference>
<dbReference type="GO" id="GO:1990904">
    <property type="term" value="C:ribonucleoprotein complex"/>
    <property type="evidence" value="ECO:0007669"/>
    <property type="project" value="UniProtKB-KW"/>
</dbReference>
<dbReference type="GO" id="GO:0005840">
    <property type="term" value="C:ribosome"/>
    <property type="evidence" value="ECO:0007669"/>
    <property type="project" value="UniProtKB-KW"/>
</dbReference>
<dbReference type="GO" id="GO:0019843">
    <property type="term" value="F:rRNA binding"/>
    <property type="evidence" value="ECO:0007669"/>
    <property type="project" value="UniProtKB-UniRule"/>
</dbReference>
<dbReference type="GO" id="GO:0003735">
    <property type="term" value="F:structural constituent of ribosome"/>
    <property type="evidence" value="ECO:0007669"/>
    <property type="project" value="InterPro"/>
</dbReference>
<dbReference type="GO" id="GO:0000027">
    <property type="term" value="P:ribosomal large subunit assembly"/>
    <property type="evidence" value="ECO:0007669"/>
    <property type="project" value="UniProtKB-UniRule"/>
</dbReference>
<dbReference type="GO" id="GO:0006412">
    <property type="term" value="P:translation"/>
    <property type="evidence" value="ECO:0007669"/>
    <property type="project" value="InterPro"/>
</dbReference>
<dbReference type="CDD" id="cd07026">
    <property type="entry name" value="Ribosomal_L20"/>
    <property type="match status" value="1"/>
</dbReference>
<dbReference type="FunFam" id="1.10.1900.20:FF:000001">
    <property type="entry name" value="50S ribosomal protein L20"/>
    <property type="match status" value="1"/>
</dbReference>
<dbReference type="Gene3D" id="6.10.160.10">
    <property type="match status" value="1"/>
</dbReference>
<dbReference type="Gene3D" id="1.10.1900.20">
    <property type="entry name" value="Ribosomal protein L20"/>
    <property type="match status" value="1"/>
</dbReference>
<dbReference type="HAMAP" id="MF_00382">
    <property type="entry name" value="Ribosomal_bL20"/>
    <property type="match status" value="1"/>
</dbReference>
<dbReference type="InterPro" id="IPR005813">
    <property type="entry name" value="Ribosomal_bL20"/>
</dbReference>
<dbReference type="InterPro" id="IPR049946">
    <property type="entry name" value="RIBOSOMAL_L20_CS"/>
</dbReference>
<dbReference type="InterPro" id="IPR035566">
    <property type="entry name" value="Ribosomal_protein_bL20_C"/>
</dbReference>
<dbReference type="NCBIfam" id="TIGR01032">
    <property type="entry name" value="rplT_bact"/>
    <property type="match status" value="1"/>
</dbReference>
<dbReference type="PANTHER" id="PTHR10986">
    <property type="entry name" value="39S RIBOSOMAL PROTEIN L20"/>
    <property type="match status" value="1"/>
</dbReference>
<dbReference type="Pfam" id="PF00453">
    <property type="entry name" value="Ribosomal_L20"/>
    <property type="match status" value="1"/>
</dbReference>
<dbReference type="PRINTS" id="PR00062">
    <property type="entry name" value="RIBOSOMALL20"/>
</dbReference>
<dbReference type="SUPFAM" id="SSF74731">
    <property type="entry name" value="Ribosomal protein L20"/>
    <property type="match status" value="1"/>
</dbReference>
<dbReference type="PROSITE" id="PS00937">
    <property type="entry name" value="RIBOSOMAL_L20"/>
    <property type="match status" value="1"/>
</dbReference>
<keyword id="KW-1185">Reference proteome</keyword>
<keyword id="KW-0687">Ribonucleoprotein</keyword>
<keyword id="KW-0689">Ribosomal protein</keyword>
<keyword id="KW-0694">RNA-binding</keyword>
<keyword id="KW-0699">rRNA-binding</keyword>
<accession>B7J7S7</accession>
<protein>
    <recommendedName>
        <fullName evidence="1">Large ribosomal subunit protein bL20</fullName>
    </recommendedName>
    <alternativeName>
        <fullName evidence="2">50S ribosomal protein L20</fullName>
    </alternativeName>
</protein>
<feature type="chain" id="PRO_1000122260" description="Large ribosomal subunit protein bL20">
    <location>
        <begin position="1"/>
        <end position="119"/>
    </location>
</feature>